<feature type="chain" id="PRO_0000086873" description="Iota-conotoxin-like R11.16">
    <location>
        <begin position="1"/>
        <end position="42"/>
    </location>
</feature>
<feature type="disulfide bond" evidence="2">
    <location>
        <begin position="5"/>
        <end position="19"/>
    </location>
</feature>
<feature type="disulfide bond" evidence="2">
    <location>
        <begin position="12"/>
        <end position="22"/>
    </location>
</feature>
<feature type="disulfide bond" evidence="2">
    <location>
        <begin position="18"/>
        <end position="27"/>
    </location>
</feature>
<feature type="disulfide bond" evidence="2">
    <location>
        <begin position="21"/>
        <end position="36"/>
    </location>
</feature>
<comment type="function">
    <text evidence="1">Iota-conotoxins bind to voltage-gated sodium channels (Nav) and act as agonists by shifting the voltage-dependence of activation to more hyperpolarized levels. Produces general excitatory symptoms (By similarity).</text>
</comment>
<comment type="subcellular location">
    <subcellularLocation>
        <location evidence="1">Secreted</location>
    </subcellularLocation>
</comment>
<comment type="tissue specificity">
    <text>Expressed by the venom duct.</text>
</comment>
<comment type="domain">
    <text>The cysteine framework is XI (C-C-CC-CC-C-C).</text>
</comment>
<comment type="similarity">
    <text evidence="3">Belongs to the conotoxin I1 superfamily.</text>
</comment>
<keyword id="KW-1015">Disulfide bond</keyword>
<keyword id="KW-0872">Ion channel impairing toxin</keyword>
<keyword id="KW-0528">Neurotoxin</keyword>
<keyword id="KW-0964">Secreted</keyword>
<keyword id="KW-0800">Toxin</keyword>
<keyword id="KW-0738">Voltage-gated sodium channel impairing toxin</keyword>
<sequence length="42" mass="4350">GHVPCGKDGRKCGYHTHCCNCCLSGICKPSTSLIGCSTSSFT</sequence>
<proteinExistence type="evidence at transcript level"/>
<name>I1BG_CONRA</name>
<protein>
    <recommendedName>
        <fullName>Iota-conotoxin-like R11.16</fullName>
    </recommendedName>
</protein>
<dbReference type="EMBL" id="AY208952">
    <property type="protein sequence ID" value="AAP41534.1"/>
    <property type="molecule type" value="mRNA"/>
</dbReference>
<dbReference type="SMR" id="Q7Z0A1"/>
<dbReference type="ConoServer" id="833">
    <property type="toxin name" value="R11.16"/>
</dbReference>
<dbReference type="GO" id="GO:0005576">
    <property type="term" value="C:extracellular region"/>
    <property type="evidence" value="ECO:0007669"/>
    <property type="project" value="UniProtKB-SubCell"/>
</dbReference>
<dbReference type="GO" id="GO:0017080">
    <property type="term" value="F:sodium channel regulator activity"/>
    <property type="evidence" value="ECO:0007669"/>
    <property type="project" value="UniProtKB-KW"/>
</dbReference>
<dbReference type="GO" id="GO:0090729">
    <property type="term" value="F:toxin activity"/>
    <property type="evidence" value="ECO:0007669"/>
    <property type="project" value="UniProtKB-KW"/>
</dbReference>
<dbReference type="Gene3D" id="4.10.40.80">
    <property type="match status" value="1"/>
</dbReference>
<dbReference type="InterPro" id="IPR013141">
    <property type="entry name" value="Conotoxin-I_CS"/>
</dbReference>
<dbReference type="InterPro" id="IPR012624">
    <property type="entry name" value="Toxin_19"/>
</dbReference>
<dbReference type="Pfam" id="PF08088">
    <property type="entry name" value="Toxin_19"/>
    <property type="match status" value="1"/>
</dbReference>
<dbReference type="PROSITE" id="PS60019">
    <property type="entry name" value="I_CONOTOXIN"/>
    <property type="match status" value="1"/>
</dbReference>
<organism>
    <name type="scientific">Conus radiatus</name>
    <name type="common">Rayed cone</name>
    <dbReference type="NCBI Taxonomy" id="61198"/>
    <lineage>
        <taxon>Eukaryota</taxon>
        <taxon>Metazoa</taxon>
        <taxon>Spiralia</taxon>
        <taxon>Lophotrochozoa</taxon>
        <taxon>Mollusca</taxon>
        <taxon>Gastropoda</taxon>
        <taxon>Caenogastropoda</taxon>
        <taxon>Neogastropoda</taxon>
        <taxon>Conoidea</taxon>
        <taxon>Conidae</taxon>
        <taxon>Conus</taxon>
        <taxon>Phasmoconus</taxon>
    </lineage>
</organism>
<accession>Q7Z0A1</accession>
<reference key="1">
    <citation type="journal article" date="2003" name="J. Neurochem.">
        <title>Novel excitatory Conus peptides define a new conotoxin superfamily.</title>
        <authorList>
            <person name="Jimenez E.C."/>
            <person name="Shetty R.P."/>
            <person name="Lirazan M."/>
            <person name="Rivier J."/>
            <person name="Walker C."/>
            <person name="Abogadie F.C."/>
            <person name="Yoshikami D."/>
            <person name="Cruz L.J."/>
            <person name="Olivera B.M."/>
        </authorList>
    </citation>
    <scope>NUCLEOTIDE SEQUENCE [MRNA]</scope>
    <source>
        <tissue>Venom duct</tissue>
    </source>
</reference>
<evidence type="ECO:0000250" key="1"/>
<evidence type="ECO:0000250" key="2">
    <source>
        <dbReference type="UniProtKB" id="Q7Z094"/>
    </source>
</evidence>
<evidence type="ECO:0000305" key="3"/>